<reference key="1">
    <citation type="submission" date="2007-09" db="EMBL/GenBank/DDBJ databases">
        <title>Complete genome sequence of Rickettsia canadensis.</title>
        <authorList>
            <person name="Madan A."/>
            <person name="Fahey J."/>
            <person name="Helton E."/>
            <person name="Ketteman M."/>
            <person name="Madan A."/>
            <person name="Rodrigues S."/>
            <person name="Sanchez A."/>
            <person name="Whiting M."/>
            <person name="Dasch G."/>
            <person name="Eremeeva M."/>
        </authorList>
    </citation>
    <scope>NUCLEOTIDE SEQUENCE [LARGE SCALE GENOMIC DNA]</scope>
    <source>
        <strain>McKiel</strain>
    </source>
</reference>
<proteinExistence type="inferred from homology"/>
<comment type="function">
    <text evidence="1">Phosphorylation of dTMP to form dTDP in both de novo and salvage pathways of dTTP synthesis.</text>
</comment>
<comment type="catalytic activity">
    <reaction evidence="1">
        <text>dTMP + ATP = dTDP + ADP</text>
        <dbReference type="Rhea" id="RHEA:13517"/>
        <dbReference type="ChEBI" id="CHEBI:30616"/>
        <dbReference type="ChEBI" id="CHEBI:58369"/>
        <dbReference type="ChEBI" id="CHEBI:63528"/>
        <dbReference type="ChEBI" id="CHEBI:456216"/>
        <dbReference type="EC" id="2.7.4.9"/>
    </reaction>
</comment>
<comment type="similarity">
    <text evidence="1">Belongs to the thymidylate kinase family.</text>
</comment>
<accession>A8EZQ1</accession>
<feature type="chain" id="PRO_1000023270" description="Thymidylate kinase">
    <location>
        <begin position="1"/>
        <end position="203"/>
    </location>
</feature>
<feature type="binding site" evidence="1">
    <location>
        <begin position="14"/>
        <end position="21"/>
    </location>
    <ligand>
        <name>ATP</name>
        <dbReference type="ChEBI" id="CHEBI:30616"/>
    </ligand>
</feature>
<organism>
    <name type="scientific">Rickettsia canadensis (strain McKiel)</name>
    <dbReference type="NCBI Taxonomy" id="293613"/>
    <lineage>
        <taxon>Bacteria</taxon>
        <taxon>Pseudomonadati</taxon>
        <taxon>Pseudomonadota</taxon>
        <taxon>Alphaproteobacteria</taxon>
        <taxon>Rickettsiales</taxon>
        <taxon>Rickettsiaceae</taxon>
        <taxon>Rickettsieae</taxon>
        <taxon>Rickettsia</taxon>
        <taxon>belli group</taxon>
    </lineage>
</organism>
<gene>
    <name evidence="1" type="primary">tmk</name>
    <name type="ordered locus">A1E_04545</name>
</gene>
<keyword id="KW-0067">ATP-binding</keyword>
<keyword id="KW-0418">Kinase</keyword>
<keyword id="KW-0545">Nucleotide biosynthesis</keyword>
<keyword id="KW-0547">Nucleotide-binding</keyword>
<keyword id="KW-0808">Transferase</keyword>
<evidence type="ECO:0000255" key="1">
    <source>
        <dbReference type="HAMAP-Rule" id="MF_00165"/>
    </source>
</evidence>
<protein>
    <recommendedName>
        <fullName evidence="1">Thymidylate kinase</fullName>
        <ecNumber evidence="1">2.7.4.9</ecNumber>
    </recommendedName>
    <alternativeName>
        <fullName evidence="1">dTMP kinase</fullName>
    </alternativeName>
</protein>
<name>KTHY_RICCK</name>
<sequence length="203" mass="23383">MNNLTQGKFITFEGGEGSGKSTQSQMLYEYLKSQNTPVILTREVGGTIVSEKMREILVHEELLPMSELLQAMAARYDHMVRKIIPVLKEGYIVICDRFLDSTACYQGLELENGIDLVYNLHKTLMPPLMPDITFFIDVEPDTAIKRVNLRNMSNKFDIRGIDFYNKIYDCFKELSNRFPARIKTIKASDLSMLEVHELIKKHL</sequence>
<dbReference type="EC" id="2.7.4.9" evidence="1"/>
<dbReference type="EMBL" id="CP000409">
    <property type="protein sequence ID" value="ABV73834.1"/>
    <property type="molecule type" value="Genomic_DNA"/>
</dbReference>
<dbReference type="RefSeq" id="WP_012149029.1">
    <property type="nucleotide sequence ID" value="NC_009879.1"/>
</dbReference>
<dbReference type="SMR" id="A8EZQ1"/>
<dbReference type="STRING" id="293613.A1E_04545"/>
<dbReference type="KEGG" id="rcm:A1E_04545"/>
<dbReference type="eggNOG" id="COG0125">
    <property type="taxonomic scope" value="Bacteria"/>
</dbReference>
<dbReference type="HOGENOM" id="CLU_049131_0_2_5"/>
<dbReference type="Proteomes" id="UP000007056">
    <property type="component" value="Chromosome"/>
</dbReference>
<dbReference type="GO" id="GO:0005829">
    <property type="term" value="C:cytosol"/>
    <property type="evidence" value="ECO:0007669"/>
    <property type="project" value="TreeGrafter"/>
</dbReference>
<dbReference type="GO" id="GO:0005524">
    <property type="term" value="F:ATP binding"/>
    <property type="evidence" value="ECO:0007669"/>
    <property type="project" value="UniProtKB-UniRule"/>
</dbReference>
<dbReference type="GO" id="GO:0004798">
    <property type="term" value="F:dTMP kinase activity"/>
    <property type="evidence" value="ECO:0007669"/>
    <property type="project" value="UniProtKB-UniRule"/>
</dbReference>
<dbReference type="GO" id="GO:0006233">
    <property type="term" value="P:dTDP biosynthetic process"/>
    <property type="evidence" value="ECO:0007669"/>
    <property type="project" value="InterPro"/>
</dbReference>
<dbReference type="GO" id="GO:0006235">
    <property type="term" value="P:dTTP biosynthetic process"/>
    <property type="evidence" value="ECO:0007669"/>
    <property type="project" value="UniProtKB-UniRule"/>
</dbReference>
<dbReference type="GO" id="GO:0006227">
    <property type="term" value="P:dUDP biosynthetic process"/>
    <property type="evidence" value="ECO:0007669"/>
    <property type="project" value="TreeGrafter"/>
</dbReference>
<dbReference type="CDD" id="cd01672">
    <property type="entry name" value="TMPK"/>
    <property type="match status" value="1"/>
</dbReference>
<dbReference type="FunFam" id="3.40.50.300:FF:000225">
    <property type="entry name" value="Thymidylate kinase"/>
    <property type="match status" value="1"/>
</dbReference>
<dbReference type="Gene3D" id="3.40.50.300">
    <property type="entry name" value="P-loop containing nucleotide triphosphate hydrolases"/>
    <property type="match status" value="1"/>
</dbReference>
<dbReference type="HAMAP" id="MF_00165">
    <property type="entry name" value="Thymidylate_kinase"/>
    <property type="match status" value="1"/>
</dbReference>
<dbReference type="InterPro" id="IPR027417">
    <property type="entry name" value="P-loop_NTPase"/>
</dbReference>
<dbReference type="InterPro" id="IPR039430">
    <property type="entry name" value="Thymidylate_kin-like_dom"/>
</dbReference>
<dbReference type="InterPro" id="IPR018095">
    <property type="entry name" value="Thymidylate_kin_CS"/>
</dbReference>
<dbReference type="InterPro" id="IPR018094">
    <property type="entry name" value="Thymidylate_kinase"/>
</dbReference>
<dbReference type="NCBIfam" id="TIGR00041">
    <property type="entry name" value="DTMP_kinase"/>
    <property type="match status" value="1"/>
</dbReference>
<dbReference type="PANTHER" id="PTHR10344">
    <property type="entry name" value="THYMIDYLATE KINASE"/>
    <property type="match status" value="1"/>
</dbReference>
<dbReference type="PANTHER" id="PTHR10344:SF4">
    <property type="entry name" value="UMP-CMP KINASE 2, MITOCHONDRIAL"/>
    <property type="match status" value="1"/>
</dbReference>
<dbReference type="Pfam" id="PF02223">
    <property type="entry name" value="Thymidylate_kin"/>
    <property type="match status" value="1"/>
</dbReference>
<dbReference type="SUPFAM" id="SSF52540">
    <property type="entry name" value="P-loop containing nucleoside triphosphate hydrolases"/>
    <property type="match status" value="1"/>
</dbReference>
<dbReference type="PROSITE" id="PS01331">
    <property type="entry name" value="THYMIDYLATE_KINASE"/>
    <property type="match status" value="1"/>
</dbReference>